<accession>Q59599</accession>
<gene>
    <name evidence="1" type="primary">carB</name>
</gene>
<name>CARB_NEIGO</name>
<feature type="chain" id="PRO_0000145024" description="Carbamoyl phosphate synthase large chain">
    <location>
        <begin position="1"/>
        <end position="1071"/>
    </location>
</feature>
<feature type="domain" description="ATP-grasp 1" evidence="1">
    <location>
        <begin position="133"/>
        <end position="328"/>
    </location>
</feature>
<feature type="domain" description="ATP-grasp 2" evidence="1">
    <location>
        <begin position="673"/>
        <end position="864"/>
    </location>
</feature>
<feature type="domain" description="MGS-like" evidence="1">
    <location>
        <begin position="931"/>
        <end position="1071"/>
    </location>
</feature>
<feature type="region of interest" description="Carboxyphosphate synthetic domain" evidence="1">
    <location>
        <begin position="1"/>
        <end position="403"/>
    </location>
</feature>
<feature type="region of interest" description="Oligomerization domain" evidence="1">
    <location>
        <begin position="404"/>
        <end position="548"/>
    </location>
</feature>
<feature type="region of interest" description="Carbamoyl phosphate synthetic domain" evidence="1">
    <location>
        <begin position="549"/>
        <end position="930"/>
    </location>
</feature>
<feature type="region of interest" description="Allosteric domain" evidence="1">
    <location>
        <begin position="931"/>
        <end position="1071"/>
    </location>
</feature>
<feature type="binding site" evidence="1">
    <location>
        <position position="169"/>
    </location>
    <ligand>
        <name>ATP</name>
        <dbReference type="ChEBI" id="CHEBI:30616"/>
        <label>1</label>
    </ligand>
</feature>
<feature type="binding site" evidence="1">
    <location>
        <position position="175"/>
    </location>
    <ligand>
        <name>ATP</name>
        <dbReference type="ChEBI" id="CHEBI:30616"/>
        <label>1</label>
    </ligand>
</feature>
<feature type="binding site" evidence="1">
    <location>
        <position position="176"/>
    </location>
    <ligand>
        <name>ATP</name>
        <dbReference type="ChEBI" id="CHEBI:30616"/>
        <label>1</label>
    </ligand>
</feature>
<feature type="binding site" evidence="1">
    <location>
        <position position="208"/>
    </location>
    <ligand>
        <name>ATP</name>
        <dbReference type="ChEBI" id="CHEBI:30616"/>
        <label>1</label>
    </ligand>
</feature>
<feature type="binding site" evidence="1">
    <location>
        <position position="210"/>
    </location>
    <ligand>
        <name>ATP</name>
        <dbReference type="ChEBI" id="CHEBI:30616"/>
        <label>1</label>
    </ligand>
</feature>
<feature type="binding site" evidence="1">
    <location>
        <position position="215"/>
    </location>
    <ligand>
        <name>ATP</name>
        <dbReference type="ChEBI" id="CHEBI:30616"/>
        <label>1</label>
    </ligand>
</feature>
<feature type="binding site" evidence="1">
    <location>
        <position position="241"/>
    </location>
    <ligand>
        <name>ATP</name>
        <dbReference type="ChEBI" id="CHEBI:30616"/>
        <label>1</label>
    </ligand>
</feature>
<feature type="binding site" evidence="1">
    <location>
        <position position="242"/>
    </location>
    <ligand>
        <name>ATP</name>
        <dbReference type="ChEBI" id="CHEBI:30616"/>
        <label>1</label>
    </ligand>
</feature>
<feature type="binding site" evidence="1">
    <location>
        <position position="243"/>
    </location>
    <ligand>
        <name>ATP</name>
        <dbReference type="ChEBI" id="CHEBI:30616"/>
        <label>1</label>
    </ligand>
</feature>
<feature type="binding site" evidence="1">
    <location>
        <position position="285"/>
    </location>
    <ligand>
        <name>ATP</name>
        <dbReference type="ChEBI" id="CHEBI:30616"/>
        <label>1</label>
    </ligand>
</feature>
<feature type="binding site" evidence="1">
    <location>
        <position position="285"/>
    </location>
    <ligand>
        <name>Mg(2+)</name>
        <dbReference type="ChEBI" id="CHEBI:18420"/>
        <label>1</label>
    </ligand>
</feature>
<feature type="binding site" evidence="1">
    <location>
        <position position="285"/>
    </location>
    <ligand>
        <name>Mn(2+)</name>
        <dbReference type="ChEBI" id="CHEBI:29035"/>
        <label>1</label>
    </ligand>
</feature>
<feature type="binding site" evidence="1">
    <location>
        <position position="299"/>
    </location>
    <ligand>
        <name>ATP</name>
        <dbReference type="ChEBI" id="CHEBI:30616"/>
        <label>1</label>
    </ligand>
</feature>
<feature type="binding site" evidence="1">
    <location>
        <position position="299"/>
    </location>
    <ligand>
        <name>Mg(2+)</name>
        <dbReference type="ChEBI" id="CHEBI:18420"/>
        <label>1</label>
    </ligand>
</feature>
<feature type="binding site" evidence="1">
    <location>
        <position position="299"/>
    </location>
    <ligand>
        <name>Mg(2+)</name>
        <dbReference type="ChEBI" id="CHEBI:18420"/>
        <label>2</label>
    </ligand>
</feature>
<feature type="binding site" evidence="1">
    <location>
        <position position="299"/>
    </location>
    <ligand>
        <name>Mn(2+)</name>
        <dbReference type="ChEBI" id="CHEBI:29035"/>
        <label>1</label>
    </ligand>
</feature>
<feature type="binding site" evidence="1">
    <location>
        <position position="299"/>
    </location>
    <ligand>
        <name>Mn(2+)</name>
        <dbReference type="ChEBI" id="CHEBI:29035"/>
        <label>2</label>
    </ligand>
</feature>
<feature type="binding site" evidence="1">
    <location>
        <position position="301"/>
    </location>
    <ligand>
        <name>Mg(2+)</name>
        <dbReference type="ChEBI" id="CHEBI:18420"/>
        <label>2</label>
    </ligand>
</feature>
<feature type="binding site" evidence="1">
    <location>
        <position position="301"/>
    </location>
    <ligand>
        <name>Mn(2+)</name>
        <dbReference type="ChEBI" id="CHEBI:29035"/>
        <label>2</label>
    </ligand>
</feature>
<feature type="binding site" evidence="1">
    <location>
        <position position="709"/>
    </location>
    <ligand>
        <name>ATP</name>
        <dbReference type="ChEBI" id="CHEBI:30616"/>
        <label>2</label>
    </ligand>
</feature>
<feature type="binding site" evidence="1">
    <location>
        <position position="748"/>
    </location>
    <ligand>
        <name>ATP</name>
        <dbReference type="ChEBI" id="CHEBI:30616"/>
        <label>2</label>
    </ligand>
</feature>
<feature type="binding site" evidence="1">
    <location>
        <position position="750"/>
    </location>
    <ligand>
        <name>ATP</name>
        <dbReference type="ChEBI" id="CHEBI:30616"/>
        <label>2</label>
    </ligand>
</feature>
<feature type="binding site" evidence="1">
    <location>
        <position position="755"/>
    </location>
    <ligand>
        <name>ATP</name>
        <dbReference type="ChEBI" id="CHEBI:30616"/>
        <label>2</label>
    </ligand>
</feature>
<feature type="binding site" evidence="1">
    <location>
        <position position="780"/>
    </location>
    <ligand>
        <name>ATP</name>
        <dbReference type="ChEBI" id="CHEBI:30616"/>
        <label>2</label>
    </ligand>
</feature>
<feature type="binding site" evidence="1">
    <location>
        <position position="781"/>
    </location>
    <ligand>
        <name>ATP</name>
        <dbReference type="ChEBI" id="CHEBI:30616"/>
        <label>2</label>
    </ligand>
</feature>
<feature type="binding site" evidence="1">
    <location>
        <position position="782"/>
    </location>
    <ligand>
        <name>ATP</name>
        <dbReference type="ChEBI" id="CHEBI:30616"/>
        <label>2</label>
    </ligand>
</feature>
<feature type="binding site" evidence="1">
    <location>
        <position position="783"/>
    </location>
    <ligand>
        <name>ATP</name>
        <dbReference type="ChEBI" id="CHEBI:30616"/>
        <label>2</label>
    </ligand>
</feature>
<feature type="binding site" evidence="1">
    <location>
        <position position="823"/>
    </location>
    <ligand>
        <name>ATP</name>
        <dbReference type="ChEBI" id="CHEBI:30616"/>
        <label>2</label>
    </ligand>
</feature>
<feature type="binding site" evidence="1">
    <location>
        <position position="823"/>
    </location>
    <ligand>
        <name>Mg(2+)</name>
        <dbReference type="ChEBI" id="CHEBI:18420"/>
        <label>3</label>
    </ligand>
</feature>
<feature type="binding site" evidence="1">
    <location>
        <position position="823"/>
    </location>
    <ligand>
        <name>Mn(2+)</name>
        <dbReference type="ChEBI" id="CHEBI:29035"/>
        <label>3</label>
    </ligand>
</feature>
<feature type="binding site" evidence="1">
    <location>
        <position position="835"/>
    </location>
    <ligand>
        <name>ATP</name>
        <dbReference type="ChEBI" id="CHEBI:30616"/>
        <label>2</label>
    </ligand>
</feature>
<feature type="binding site" evidence="1">
    <location>
        <position position="835"/>
    </location>
    <ligand>
        <name>Mg(2+)</name>
        <dbReference type="ChEBI" id="CHEBI:18420"/>
        <label>3</label>
    </ligand>
</feature>
<feature type="binding site" evidence="1">
    <location>
        <position position="835"/>
    </location>
    <ligand>
        <name>Mg(2+)</name>
        <dbReference type="ChEBI" id="CHEBI:18420"/>
        <label>4</label>
    </ligand>
</feature>
<feature type="binding site" evidence="1">
    <location>
        <position position="835"/>
    </location>
    <ligand>
        <name>Mn(2+)</name>
        <dbReference type="ChEBI" id="CHEBI:29035"/>
        <label>3</label>
    </ligand>
</feature>
<feature type="binding site" evidence="1">
    <location>
        <position position="835"/>
    </location>
    <ligand>
        <name>Mn(2+)</name>
        <dbReference type="ChEBI" id="CHEBI:29035"/>
        <label>4</label>
    </ligand>
</feature>
<feature type="binding site" evidence="1">
    <location>
        <position position="837"/>
    </location>
    <ligand>
        <name>Mg(2+)</name>
        <dbReference type="ChEBI" id="CHEBI:18420"/>
        <label>4</label>
    </ligand>
</feature>
<feature type="binding site" evidence="1">
    <location>
        <position position="837"/>
    </location>
    <ligand>
        <name>Mn(2+)</name>
        <dbReference type="ChEBI" id="CHEBI:29035"/>
        <label>4</label>
    </ligand>
</feature>
<reference key="1">
    <citation type="journal article" date="1995" name="Microbiology">
        <title>Organization of carbamoyl-phosphate synthase genes in Neisseria gonorrhoeae includes a large, variable intergenic sequence which is also present in other Neisseria species.</title>
        <authorList>
            <person name="Lawson F.S."/>
            <person name="Billowes F.M."/>
            <person name="Dillon J.A."/>
        </authorList>
    </citation>
    <scope>NUCLEOTIDE SEQUENCE [GENOMIC DNA]</scope>
    <source>
        <strain>CH811</strain>
    </source>
</reference>
<comment type="function">
    <text evidence="1">Large subunit of the glutamine-dependent carbamoyl phosphate synthetase (CPSase). CPSase catalyzes the formation of carbamoyl phosphate from the ammonia moiety of glutamine, carbonate, and phosphate donated by ATP, constituting the first step of 2 biosynthetic pathways, one leading to arginine and/or urea and the other to pyrimidine nucleotides. The large subunit (synthetase) binds the substrates ammonia (free or transferred from glutamine from the small subunit), hydrogencarbonate and ATP and carries out an ATP-coupled ligase reaction, activating hydrogencarbonate by forming carboxy phosphate which reacts with ammonia to form carbamoyl phosphate.</text>
</comment>
<comment type="catalytic activity">
    <reaction evidence="1">
        <text>hydrogencarbonate + L-glutamine + 2 ATP + H2O = carbamoyl phosphate + L-glutamate + 2 ADP + phosphate + 2 H(+)</text>
        <dbReference type="Rhea" id="RHEA:18633"/>
        <dbReference type="ChEBI" id="CHEBI:15377"/>
        <dbReference type="ChEBI" id="CHEBI:15378"/>
        <dbReference type="ChEBI" id="CHEBI:17544"/>
        <dbReference type="ChEBI" id="CHEBI:29985"/>
        <dbReference type="ChEBI" id="CHEBI:30616"/>
        <dbReference type="ChEBI" id="CHEBI:43474"/>
        <dbReference type="ChEBI" id="CHEBI:58228"/>
        <dbReference type="ChEBI" id="CHEBI:58359"/>
        <dbReference type="ChEBI" id="CHEBI:456216"/>
        <dbReference type="EC" id="6.3.5.5"/>
    </reaction>
</comment>
<comment type="catalytic activity">
    <molecule>Carbamoyl phosphate synthase large chain</molecule>
    <reaction evidence="1">
        <text>hydrogencarbonate + NH4(+) + 2 ATP = carbamoyl phosphate + 2 ADP + phosphate + 2 H(+)</text>
        <dbReference type="Rhea" id="RHEA:18029"/>
        <dbReference type="ChEBI" id="CHEBI:15378"/>
        <dbReference type="ChEBI" id="CHEBI:17544"/>
        <dbReference type="ChEBI" id="CHEBI:28938"/>
        <dbReference type="ChEBI" id="CHEBI:30616"/>
        <dbReference type="ChEBI" id="CHEBI:43474"/>
        <dbReference type="ChEBI" id="CHEBI:58228"/>
        <dbReference type="ChEBI" id="CHEBI:456216"/>
        <dbReference type="EC" id="6.3.4.16"/>
    </reaction>
</comment>
<comment type="cofactor">
    <cofactor evidence="1">
        <name>Mg(2+)</name>
        <dbReference type="ChEBI" id="CHEBI:18420"/>
    </cofactor>
    <cofactor evidence="1">
        <name>Mn(2+)</name>
        <dbReference type="ChEBI" id="CHEBI:29035"/>
    </cofactor>
    <text evidence="1">Binds 4 Mg(2+) or Mn(2+) ions per subunit.</text>
</comment>
<comment type="pathway">
    <text evidence="1">Amino-acid biosynthesis; L-arginine biosynthesis; carbamoyl phosphate from bicarbonate: step 1/1.</text>
</comment>
<comment type="pathway">
    <text evidence="1">Pyrimidine metabolism; UMP biosynthesis via de novo pathway; (S)-dihydroorotate from bicarbonate: step 1/3.</text>
</comment>
<comment type="subunit">
    <text evidence="1">Composed of two chains; the small (or glutamine) chain promotes the hydrolysis of glutamine to ammonia, which is used by the large (or ammonia) chain to synthesize carbamoyl phosphate. Tetramer of heterodimers (alpha,beta)4.</text>
</comment>
<comment type="domain">
    <text evidence="1">The large subunit is composed of 2 ATP-grasp domains that are involved in binding the 2 ATP molecules needed for carbamoyl phosphate synthesis. The N-terminal ATP-grasp domain (referred to as the carboxyphosphate synthetic component) catalyzes the ATP-dependent phosphorylation of hydrogencarbonate to carboxyphosphate and the subsequent nucleophilic attack by ammonia to form a carbamate intermediate. The C-terminal ATP-grasp domain (referred to as the carbamoyl phosphate synthetic component) then catalyzes the phosphorylation of carbamate with the second ATP to form the end product carbamoyl phosphate. The reactive and unstable enzyme intermediates are sequentially channeled from one active site to the next through the interior of the protein over a distance of at least 96 A.</text>
</comment>
<comment type="similarity">
    <text evidence="1">Belongs to the CarB family.</text>
</comment>
<comment type="sequence caution" evidence="2">
    <conflict type="frameshift">
        <sequence resource="EMBL-CDS" id="AAA74996"/>
    </conflict>
</comment>
<organism>
    <name type="scientific">Neisseria gonorrhoeae</name>
    <dbReference type="NCBI Taxonomy" id="485"/>
    <lineage>
        <taxon>Bacteria</taxon>
        <taxon>Pseudomonadati</taxon>
        <taxon>Pseudomonadota</taxon>
        <taxon>Betaproteobacteria</taxon>
        <taxon>Neisseriales</taxon>
        <taxon>Neisseriaceae</taxon>
        <taxon>Neisseria</taxon>
    </lineage>
</organism>
<evidence type="ECO:0000255" key="1">
    <source>
        <dbReference type="HAMAP-Rule" id="MF_01210"/>
    </source>
</evidence>
<evidence type="ECO:0000305" key="2"/>
<keyword id="KW-0028">Amino-acid biosynthesis</keyword>
<keyword id="KW-0055">Arginine biosynthesis</keyword>
<keyword id="KW-0067">ATP-binding</keyword>
<keyword id="KW-0436">Ligase</keyword>
<keyword id="KW-0460">Magnesium</keyword>
<keyword id="KW-0464">Manganese</keyword>
<keyword id="KW-0479">Metal-binding</keyword>
<keyword id="KW-0547">Nucleotide-binding</keyword>
<keyword id="KW-0665">Pyrimidine biosynthesis</keyword>
<keyword id="KW-0677">Repeat</keyword>
<sequence>MPKRTDLKSILIIGAGPIVIGQACEFDYSGAQACKALREEGYKVILVNSNPATIMTDPEMADVTYIEPIMWQTVEKIIAKERPDAILPTMGGQTXLNCALDLAGNGVLAKYDVELIGATEDAIDKAEDPGRFKEAMEKIGLSCPKSLFCHTMNEALAAQEQVGFPTLIRPSFTMGGSGGGIAYNKDEFLAICERGFDASPTHELLIEQSVLGWKEYEMEVVRDKADNCIIICSIENFDPMGVHTGDSITVAPAETLTDKEYQIMRNASLAVLREIGVDTGGSNVQFAVNPEKGEMIVIEMNPRVSRSSALASKATGFPIAKVAANWAVGFTLDELRNDITGRRTPASFEPSIDYVVTKMARFAFEKFPAADDRLTTQMKSVGEVMAMGRTIQESFQKALRGLETGLCGFNPARRRQTEIRRELANPGPERMLFVGKAFRAAFTPEEIHEISAIDPWFLAQIEDLMKEEKSVSDGQLQDLDYAALHRLKRKGFSDKRLAQLLNVSEKEVRETRTPVKLDPVYKPVDTSAAEFATETAYLYSTYEEECESRPSDRKKVMILGAGPNPIGQGIEFDYCSVHAALPLRESGFETIMVNCNPETVSTDFDTSDRLYFEPLTLEDVLEIVRTENPWGVIVHYGGQTPLKLANALVENGVNIIGTSADSIDAAEDRERFQKVLNDLGLRQPPNRIAHNEEEALVKAEEIGYPLVVRPSYVLGGPAMQIVHSAEALQKYMREPVQVSEDSPVLLDFFLNNAIEVDVDCVSDGKDVVIGGIMQHVEQAGIHSGDSGCSLPPYSLSEEIQDEIRRQTKAMAYALGLVGLMNVQFAVQDAVVFVLEVNPRATRTVPFVSKATGQRLAKVGARCMAGISLKEQGVEKEVVPDFYAVKEAVFPFIKFPGVDTILNPEMRSTGEVMGVGRSFGEAYYKAQLGAGERLNPTGKIFLSVREEDKERVIKTAKNFQALGYGICPTRGTAQYLTEHGLIVQAINKVPEGRPHIGDALKNGEIALVVNTVSSDPQSVSDSHIIRQSALQQRVPQYTTTAGGEAMSEGAKSRDYLGVYSVQELHGRLKNRN</sequence>
<dbReference type="EC" id="6.3.4.16" evidence="1"/>
<dbReference type="EC" id="6.3.5.5" evidence="1"/>
<dbReference type="EMBL" id="U11295">
    <property type="protein sequence ID" value="AAA74996.1"/>
    <property type="status" value="ALT_FRAME"/>
    <property type="molecule type" value="Genomic_DNA"/>
</dbReference>
<dbReference type="UniPathway" id="UPA00068">
    <property type="reaction ID" value="UER00171"/>
</dbReference>
<dbReference type="UniPathway" id="UPA00070">
    <property type="reaction ID" value="UER00115"/>
</dbReference>
<dbReference type="GO" id="GO:0005737">
    <property type="term" value="C:cytoplasm"/>
    <property type="evidence" value="ECO:0007669"/>
    <property type="project" value="TreeGrafter"/>
</dbReference>
<dbReference type="GO" id="GO:0005524">
    <property type="term" value="F:ATP binding"/>
    <property type="evidence" value="ECO:0007669"/>
    <property type="project" value="UniProtKB-UniRule"/>
</dbReference>
<dbReference type="GO" id="GO:0004087">
    <property type="term" value="F:carbamoyl-phosphate synthase (ammonia) activity"/>
    <property type="evidence" value="ECO:0007669"/>
    <property type="project" value="RHEA"/>
</dbReference>
<dbReference type="GO" id="GO:0004088">
    <property type="term" value="F:carbamoyl-phosphate synthase (glutamine-hydrolyzing) activity"/>
    <property type="evidence" value="ECO:0007669"/>
    <property type="project" value="UniProtKB-UniRule"/>
</dbReference>
<dbReference type="GO" id="GO:0046872">
    <property type="term" value="F:metal ion binding"/>
    <property type="evidence" value="ECO:0007669"/>
    <property type="project" value="UniProtKB-KW"/>
</dbReference>
<dbReference type="GO" id="GO:0044205">
    <property type="term" value="P:'de novo' UMP biosynthetic process"/>
    <property type="evidence" value="ECO:0007669"/>
    <property type="project" value="UniProtKB-UniRule"/>
</dbReference>
<dbReference type="GO" id="GO:0006541">
    <property type="term" value="P:glutamine metabolic process"/>
    <property type="evidence" value="ECO:0007669"/>
    <property type="project" value="TreeGrafter"/>
</dbReference>
<dbReference type="GO" id="GO:0006526">
    <property type="term" value="P:L-arginine biosynthetic process"/>
    <property type="evidence" value="ECO:0007669"/>
    <property type="project" value="UniProtKB-UniRule"/>
</dbReference>
<dbReference type="CDD" id="cd01424">
    <property type="entry name" value="MGS_CPS_II"/>
    <property type="match status" value="1"/>
</dbReference>
<dbReference type="FunFam" id="1.10.1030.10:FF:000002">
    <property type="entry name" value="Carbamoyl-phosphate synthase large chain"/>
    <property type="match status" value="1"/>
</dbReference>
<dbReference type="FunFam" id="3.30.470.20:FF:000007">
    <property type="entry name" value="Carbamoyl-phosphate synthase large chain"/>
    <property type="match status" value="1"/>
</dbReference>
<dbReference type="FunFam" id="3.30.470.20:FF:000013">
    <property type="entry name" value="Carbamoyl-phosphate synthase large chain"/>
    <property type="match status" value="1"/>
</dbReference>
<dbReference type="FunFam" id="3.40.50.20:FF:000001">
    <property type="entry name" value="Carbamoyl-phosphate synthase large chain"/>
    <property type="match status" value="1"/>
</dbReference>
<dbReference type="FunFam" id="3.40.50.20:FF:000003">
    <property type="entry name" value="Carbamoyl-phosphate synthase large chain"/>
    <property type="match status" value="1"/>
</dbReference>
<dbReference type="Gene3D" id="3.40.50.20">
    <property type="match status" value="2"/>
</dbReference>
<dbReference type="Gene3D" id="3.30.470.20">
    <property type="entry name" value="ATP-grasp fold, B domain"/>
    <property type="match status" value="2"/>
</dbReference>
<dbReference type="Gene3D" id="1.10.1030.10">
    <property type="entry name" value="Carbamoyl-phosphate synthetase, large subunit oligomerisation domain"/>
    <property type="match status" value="1"/>
</dbReference>
<dbReference type="Gene3D" id="3.40.50.1380">
    <property type="entry name" value="Methylglyoxal synthase-like domain"/>
    <property type="match status" value="1"/>
</dbReference>
<dbReference type="HAMAP" id="MF_01210_B">
    <property type="entry name" value="CPSase_L_chain_B"/>
    <property type="match status" value="1"/>
</dbReference>
<dbReference type="InterPro" id="IPR011761">
    <property type="entry name" value="ATP-grasp"/>
</dbReference>
<dbReference type="InterPro" id="IPR006275">
    <property type="entry name" value="CarbamoylP_synth_lsu"/>
</dbReference>
<dbReference type="InterPro" id="IPR005480">
    <property type="entry name" value="CarbamoylP_synth_lsu_oligo"/>
</dbReference>
<dbReference type="InterPro" id="IPR036897">
    <property type="entry name" value="CarbamoylP_synth_lsu_oligo_sf"/>
</dbReference>
<dbReference type="InterPro" id="IPR005479">
    <property type="entry name" value="CbamoylP_synth_lsu-like_ATP-bd"/>
</dbReference>
<dbReference type="InterPro" id="IPR005483">
    <property type="entry name" value="CbamoylP_synth_lsu_CPSase_dom"/>
</dbReference>
<dbReference type="InterPro" id="IPR011607">
    <property type="entry name" value="MGS-like_dom"/>
</dbReference>
<dbReference type="InterPro" id="IPR036914">
    <property type="entry name" value="MGS-like_dom_sf"/>
</dbReference>
<dbReference type="InterPro" id="IPR033937">
    <property type="entry name" value="MGS_CPS_CarB"/>
</dbReference>
<dbReference type="InterPro" id="IPR016185">
    <property type="entry name" value="PreATP-grasp_dom_sf"/>
</dbReference>
<dbReference type="NCBIfam" id="TIGR01369">
    <property type="entry name" value="CPSaseII_lrg"/>
    <property type="match status" value="1"/>
</dbReference>
<dbReference type="NCBIfam" id="NF003671">
    <property type="entry name" value="PRK05294.1"/>
    <property type="match status" value="1"/>
</dbReference>
<dbReference type="NCBIfam" id="NF009455">
    <property type="entry name" value="PRK12815.1"/>
    <property type="match status" value="1"/>
</dbReference>
<dbReference type="PANTHER" id="PTHR11405:SF53">
    <property type="entry name" value="CARBAMOYL-PHOSPHATE SYNTHASE [AMMONIA], MITOCHONDRIAL"/>
    <property type="match status" value="1"/>
</dbReference>
<dbReference type="PANTHER" id="PTHR11405">
    <property type="entry name" value="CARBAMOYLTRANSFERASE FAMILY MEMBER"/>
    <property type="match status" value="1"/>
</dbReference>
<dbReference type="Pfam" id="PF02786">
    <property type="entry name" value="CPSase_L_D2"/>
    <property type="match status" value="2"/>
</dbReference>
<dbReference type="Pfam" id="PF02787">
    <property type="entry name" value="CPSase_L_D3"/>
    <property type="match status" value="1"/>
</dbReference>
<dbReference type="Pfam" id="PF02142">
    <property type="entry name" value="MGS"/>
    <property type="match status" value="1"/>
</dbReference>
<dbReference type="PRINTS" id="PR00098">
    <property type="entry name" value="CPSASE"/>
</dbReference>
<dbReference type="SMART" id="SM01096">
    <property type="entry name" value="CPSase_L_D3"/>
    <property type="match status" value="1"/>
</dbReference>
<dbReference type="SMART" id="SM00851">
    <property type="entry name" value="MGS"/>
    <property type="match status" value="1"/>
</dbReference>
<dbReference type="SUPFAM" id="SSF48108">
    <property type="entry name" value="Carbamoyl phosphate synthetase, large subunit connection domain"/>
    <property type="match status" value="1"/>
</dbReference>
<dbReference type="SUPFAM" id="SSF56059">
    <property type="entry name" value="Glutathione synthetase ATP-binding domain-like"/>
    <property type="match status" value="2"/>
</dbReference>
<dbReference type="SUPFAM" id="SSF52335">
    <property type="entry name" value="Methylglyoxal synthase-like"/>
    <property type="match status" value="1"/>
</dbReference>
<dbReference type="SUPFAM" id="SSF52440">
    <property type="entry name" value="PreATP-grasp domain"/>
    <property type="match status" value="2"/>
</dbReference>
<dbReference type="PROSITE" id="PS50975">
    <property type="entry name" value="ATP_GRASP"/>
    <property type="match status" value="2"/>
</dbReference>
<dbReference type="PROSITE" id="PS00866">
    <property type="entry name" value="CPSASE_1"/>
    <property type="match status" value="1"/>
</dbReference>
<dbReference type="PROSITE" id="PS00867">
    <property type="entry name" value="CPSASE_2"/>
    <property type="match status" value="2"/>
</dbReference>
<dbReference type="PROSITE" id="PS51855">
    <property type="entry name" value="MGS"/>
    <property type="match status" value="1"/>
</dbReference>
<proteinExistence type="inferred from homology"/>
<protein>
    <recommendedName>
        <fullName evidence="1">Carbamoyl phosphate synthase large chain</fullName>
        <ecNumber evidence="1">6.3.4.16</ecNumber>
        <ecNumber evidence="1">6.3.5.5</ecNumber>
    </recommendedName>
    <alternativeName>
        <fullName evidence="1">Carbamoyl phosphate synthetase ammonia chain</fullName>
    </alternativeName>
</protein>